<protein>
    <recommendedName>
        <fullName evidence="1">Ribonuclease Z</fullName>
        <shortName evidence="1">RNase Z</shortName>
        <ecNumber evidence="1">3.1.26.11</ecNumber>
    </recommendedName>
    <alternativeName>
        <fullName evidence="1">tRNA 3 endonuclease</fullName>
    </alternativeName>
    <alternativeName>
        <fullName evidence="1">tRNase Z</fullName>
    </alternativeName>
</protein>
<gene>
    <name evidence="1" type="primary">rnz</name>
    <name type="ordered locus">P9303_05331</name>
</gene>
<evidence type="ECO:0000255" key="1">
    <source>
        <dbReference type="HAMAP-Rule" id="MF_01818"/>
    </source>
</evidence>
<feature type="chain" id="PRO_1000070316" description="Ribonuclease Z">
    <location>
        <begin position="1"/>
        <end position="318"/>
    </location>
</feature>
<feature type="active site" description="Proton acceptor" evidence="1">
    <location>
        <position position="66"/>
    </location>
</feature>
<feature type="binding site" evidence="1">
    <location>
        <position position="62"/>
    </location>
    <ligand>
        <name>Zn(2+)</name>
        <dbReference type="ChEBI" id="CHEBI:29105"/>
        <label>1</label>
        <note>catalytic</note>
    </ligand>
</feature>
<feature type="binding site" evidence="1">
    <location>
        <position position="64"/>
    </location>
    <ligand>
        <name>Zn(2+)</name>
        <dbReference type="ChEBI" id="CHEBI:29105"/>
        <label>1</label>
        <note>catalytic</note>
    </ligand>
</feature>
<feature type="binding site" evidence="1">
    <location>
        <position position="66"/>
    </location>
    <ligand>
        <name>Zn(2+)</name>
        <dbReference type="ChEBI" id="CHEBI:29105"/>
        <label>2</label>
        <note>catalytic</note>
    </ligand>
</feature>
<feature type="binding site" evidence="1">
    <location>
        <position position="67"/>
    </location>
    <ligand>
        <name>Zn(2+)</name>
        <dbReference type="ChEBI" id="CHEBI:29105"/>
        <label>2</label>
        <note>catalytic</note>
    </ligand>
</feature>
<feature type="binding site" evidence="1">
    <location>
        <position position="144"/>
    </location>
    <ligand>
        <name>Zn(2+)</name>
        <dbReference type="ChEBI" id="CHEBI:29105"/>
        <label>1</label>
        <note>catalytic</note>
    </ligand>
</feature>
<feature type="binding site" evidence="1">
    <location>
        <position position="215"/>
    </location>
    <ligand>
        <name>Zn(2+)</name>
        <dbReference type="ChEBI" id="CHEBI:29105"/>
        <label>1</label>
        <note>catalytic</note>
    </ligand>
</feature>
<feature type="binding site" evidence="1">
    <location>
        <position position="215"/>
    </location>
    <ligand>
        <name>Zn(2+)</name>
        <dbReference type="ChEBI" id="CHEBI:29105"/>
        <label>2</label>
        <note>catalytic</note>
    </ligand>
</feature>
<feature type="binding site" evidence="1">
    <location>
        <position position="273"/>
    </location>
    <ligand>
        <name>Zn(2+)</name>
        <dbReference type="ChEBI" id="CHEBI:29105"/>
        <label>2</label>
        <note>catalytic</note>
    </ligand>
</feature>
<keyword id="KW-0255">Endonuclease</keyword>
<keyword id="KW-0378">Hydrolase</keyword>
<keyword id="KW-0479">Metal-binding</keyword>
<keyword id="KW-0540">Nuclease</keyword>
<keyword id="KW-0819">tRNA processing</keyword>
<keyword id="KW-0862">Zinc</keyword>
<dbReference type="EC" id="3.1.26.11" evidence="1"/>
<dbReference type="EMBL" id="CP000554">
    <property type="protein sequence ID" value="ABM77285.1"/>
    <property type="molecule type" value="Genomic_DNA"/>
</dbReference>
<dbReference type="RefSeq" id="WP_011825207.1">
    <property type="nucleotide sequence ID" value="NC_008820.1"/>
</dbReference>
<dbReference type="SMR" id="A2C725"/>
<dbReference type="STRING" id="59922.P9303_05331"/>
<dbReference type="KEGG" id="pmf:P9303_05331"/>
<dbReference type="HOGENOM" id="CLU_031317_2_0_3"/>
<dbReference type="BioCyc" id="PMAR59922:G1G80-491-MONOMER"/>
<dbReference type="Proteomes" id="UP000002274">
    <property type="component" value="Chromosome"/>
</dbReference>
<dbReference type="GO" id="GO:0042781">
    <property type="term" value="F:3'-tRNA processing endoribonuclease activity"/>
    <property type="evidence" value="ECO:0007669"/>
    <property type="project" value="UniProtKB-UniRule"/>
</dbReference>
<dbReference type="GO" id="GO:0008270">
    <property type="term" value="F:zinc ion binding"/>
    <property type="evidence" value="ECO:0007669"/>
    <property type="project" value="UniProtKB-UniRule"/>
</dbReference>
<dbReference type="CDD" id="cd07717">
    <property type="entry name" value="RNaseZ_ZiPD-like_MBL-fold"/>
    <property type="match status" value="1"/>
</dbReference>
<dbReference type="FunFam" id="3.60.15.10:FF:000002">
    <property type="entry name" value="Ribonuclease Z"/>
    <property type="match status" value="1"/>
</dbReference>
<dbReference type="Gene3D" id="3.60.15.10">
    <property type="entry name" value="Ribonuclease Z/Hydroxyacylglutathione hydrolase-like"/>
    <property type="match status" value="1"/>
</dbReference>
<dbReference type="HAMAP" id="MF_01818">
    <property type="entry name" value="RNase_Z_BN"/>
    <property type="match status" value="1"/>
</dbReference>
<dbReference type="InterPro" id="IPR001279">
    <property type="entry name" value="Metallo-B-lactamas"/>
</dbReference>
<dbReference type="InterPro" id="IPR036866">
    <property type="entry name" value="RibonucZ/Hydroxyglut_hydro"/>
</dbReference>
<dbReference type="InterPro" id="IPR013471">
    <property type="entry name" value="RNase_Z/BN"/>
</dbReference>
<dbReference type="NCBIfam" id="NF000801">
    <property type="entry name" value="PRK00055.1-3"/>
    <property type="match status" value="1"/>
</dbReference>
<dbReference type="NCBIfam" id="TIGR02651">
    <property type="entry name" value="RNase_Z"/>
    <property type="match status" value="1"/>
</dbReference>
<dbReference type="PANTHER" id="PTHR46018">
    <property type="entry name" value="ZINC PHOSPHODIESTERASE ELAC PROTEIN 1"/>
    <property type="match status" value="1"/>
</dbReference>
<dbReference type="PANTHER" id="PTHR46018:SF2">
    <property type="entry name" value="ZINC PHOSPHODIESTERASE ELAC PROTEIN 1"/>
    <property type="match status" value="1"/>
</dbReference>
<dbReference type="Pfam" id="PF12706">
    <property type="entry name" value="Lactamase_B_2"/>
    <property type="match status" value="2"/>
</dbReference>
<dbReference type="SUPFAM" id="SSF56281">
    <property type="entry name" value="Metallo-hydrolase/oxidoreductase"/>
    <property type="match status" value="1"/>
</dbReference>
<accession>A2C725</accession>
<reference key="1">
    <citation type="journal article" date="2007" name="PLoS Genet.">
        <title>Patterns and implications of gene gain and loss in the evolution of Prochlorococcus.</title>
        <authorList>
            <person name="Kettler G.C."/>
            <person name="Martiny A.C."/>
            <person name="Huang K."/>
            <person name="Zucker J."/>
            <person name="Coleman M.L."/>
            <person name="Rodrigue S."/>
            <person name="Chen F."/>
            <person name="Lapidus A."/>
            <person name="Ferriera S."/>
            <person name="Johnson J."/>
            <person name="Steglich C."/>
            <person name="Church G.M."/>
            <person name="Richardson P."/>
            <person name="Chisholm S.W."/>
        </authorList>
    </citation>
    <scope>NUCLEOTIDE SEQUENCE [LARGE SCALE GENOMIC DNA]</scope>
    <source>
        <strain>MIT 9303</strain>
    </source>
</reference>
<organism>
    <name type="scientific">Prochlorococcus marinus (strain MIT 9303)</name>
    <dbReference type="NCBI Taxonomy" id="59922"/>
    <lineage>
        <taxon>Bacteria</taxon>
        <taxon>Bacillati</taxon>
        <taxon>Cyanobacteriota</taxon>
        <taxon>Cyanophyceae</taxon>
        <taxon>Synechococcales</taxon>
        <taxon>Prochlorococcaceae</taxon>
        <taxon>Prochlorococcus</taxon>
    </lineage>
</organism>
<proteinExistence type="inferred from homology"/>
<comment type="function">
    <text evidence="1">Zinc phosphodiesterase, which displays some tRNA 3'-processing endonuclease activity. Probably involved in tRNA maturation, by removing a 3'-trailer from precursor tRNA.</text>
</comment>
<comment type="catalytic activity">
    <reaction evidence="1">
        <text>Endonucleolytic cleavage of RNA, removing extra 3' nucleotides from tRNA precursor, generating 3' termini of tRNAs. A 3'-hydroxy group is left at the tRNA terminus and a 5'-phosphoryl group is left at the trailer molecule.</text>
        <dbReference type="EC" id="3.1.26.11"/>
    </reaction>
</comment>
<comment type="cofactor">
    <cofactor evidence="1">
        <name>Zn(2+)</name>
        <dbReference type="ChEBI" id="CHEBI:29105"/>
    </cofactor>
    <text evidence="1">Binds 2 Zn(2+) ions.</text>
</comment>
<comment type="subunit">
    <text evidence="1">Homodimer.</text>
</comment>
<comment type="similarity">
    <text evidence="1">Belongs to the RNase Z family.</text>
</comment>
<name>RNZ_PROM3</name>
<sequence>MQVTFLGTSSGVPTRARNVSAVALRLPQRAELWLFDCGEGTQHQFLRSDLRLSQLRRVFVSHMHGDHVFGLPGLLASLGLSGNSNGVDLYGPDPLESYLQGVLRNSSTRIGYPLKVHRVRDAAEQNLIVFEDKDILVRCTPLTHRVPAYAYRVEQKPKPGHFNLERAQRLGIPPGPVYAALKRGEQVSLDDGRVVDGRDFCGPDRPGASIVFCTDTVFSEAAVALAAGADLLIHEATFAHSEAEMAYQKQHSTSTMAAQTAAEAGVGKLVLTHLSPRYAPGNPVTPNDLLREAQAIFSNTILAKDFLSFEVAPRCNSS</sequence>